<dbReference type="EC" id="2.5.1.61" evidence="1"/>
<dbReference type="EMBL" id="CP001019">
    <property type="protein sequence ID" value="ACJ19308.1"/>
    <property type="molecule type" value="Genomic_DNA"/>
</dbReference>
<dbReference type="RefSeq" id="WP_010958635.1">
    <property type="nucleotide sequence ID" value="NC_011527.1"/>
</dbReference>
<dbReference type="SMR" id="B6J3T6"/>
<dbReference type="KEGG" id="cbg:CbuG_2075"/>
<dbReference type="HOGENOM" id="CLU_019704_1_0_6"/>
<dbReference type="UniPathway" id="UPA00251">
    <property type="reaction ID" value="UER00319"/>
</dbReference>
<dbReference type="GO" id="GO:0005737">
    <property type="term" value="C:cytoplasm"/>
    <property type="evidence" value="ECO:0007669"/>
    <property type="project" value="TreeGrafter"/>
</dbReference>
<dbReference type="GO" id="GO:0004418">
    <property type="term" value="F:hydroxymethylbilane synthase activity"/>
    <property type="evidence" value="ECO:0007669"/>
    <property type="project" value="UniProtKB-UniRule"/>
</dbReference>
<dbReference type="GO" id="GO:0006782">
    <property type="term" value="P:protoporphyrinogen IX biosynthetic process"/>
    <property type="evidence" value="ECO:0007669"/>
    <property type="project" value="UniProtKB-UniRule"/>
</dbReference>
<dbReference type="FunFam" id="3.40.190.10:FF:000005">
    <property type="entry name" value="Porphobilinogen deaminase"/>
    <property type="match status" value="1"/>
</dbReference>
<dbReference type="FunFam" id="3.40.190.10:FF:000086">
    <property type="entry name" value="Probable porphobilinogen deaminase"/>
    <property type="match status" value="1"/>
</dbReference>
<dbReference type="Gene3D" id="3.40.190.10">
    <property type="entry name" value="Periplasmic binding protein-like II"/>
    <property type="match status" value="2"/>
</dbReference>
<dbReference type="Gene3D" id="3.30.160.40">
    <property type="entry name" value="Porphobilinogen deaminase, C-terminal domain"/>
    <property type="match status" value="1"/>
</dbReference>
<dbReference type="HAMAP" id="MF_00260">
    <property type="entry name" value="Porphobil_deam"/>
    <property type="match status" value="1"/>
</dbReference>
<dbReference type="InterPro" id="IPR000860">
    <property type="entry name" value="HemC"/>
</dbReference>
<dbReference type="InterPro" id="IPR022419">
    <property type="entry name" value="Porphobilin_deaminase_cofac_BS"/>
</dbReference>
<dbReference type="InterPro" id="IPR022417">
    <property type="entry name" value="Porphobilin_deaminase_N"/>
</dbReference>
<dbReference type="InterPro" id="IPR022418">
    <property type="entry name" value="Porphobilinogen_deaminase_C"/>
</dbReference>
<dbReference type="InterPro" id="IPR036803">
    <property type="entry name" value="Porphobilinogen_deaminase_C_sf"/>
</dbReference>
<dbReference type="NCBIfam" id="TIGR00212">
    <property type="entry name" value="hemC"/>
    <property type="match status" value="1"/>
</dbReference>
<dbReference type="PANTHER" id="PTHR11557">
    <property type="entry name" value="PORPHOBILINOGEN DEAMINASE"/>
    <property type="match status" value="1"/>
</dbReference>
<dbReference type="PANTHER" id="PTHR11557:SF0">
    <property type="entry name" value="PORPHOBILINOGEN DEAMINASE"/>
    <property type="match status" value="1"/>
</dbReference>
<dbReference type="Pfam" id="PF01379">
    <property type="entry name" value="Porphobil_deam"/>
    <property type="match status" value="1"/>
</dbReference>
<dbReference type="Pfam" id="PF03900">
    <property type="entry name" value="Porphobil_deamC"/>
    <property type="match status" value="1"/>
</dbReference>
<dbReference type="PIRSF" id="PIRSF001438">
    <property type="entry name" value="4pyrrol_synth_OHMeBilane_synth"/>
    <property type="match status" value="1"/>
</dbReference>
<dbReference type="PRINTS" id="PR00151">
    <property type="entry name" value="PORPHBDMNASE"/>
</dbReference>
<dbReference type="SUPFAM" id="SSF53850">
    <property type="entry name" value="Periplasmic binding protein-like II"/>
    <property type="match status" value="1"/>
</dbReference>
<dbReference type="SUPFAM" id="SSF54782">
    <property type="entry name" value="Porphobilinogen deaminase (hydroxymethylbilane synthase), C-terminal domain"/>
    <property type="match status" value="1"/>
</dbReference>
<dbReference type="PROSITE" id="PS00533">
    <property type="entry name" value="PORPHOBILINOGEN_DEAM"/>
    <property type="match status" value="1"/>
</dbReference>
<feature type="chain" id="PRO_1000114147" description="Porphobilinogen deaminase">
    <location>
        <begin position="1"/>
        <end position="307"/>
    </location>
</feature>
<feature type="modified residue" description="S-(dipyrrolylmethanemethyl)cysteine" evidence="1">
    <location>
        <position position="241"/>
    </location>
</feature>
<organism>
    <name type="scientific">Coxiella burnetii (strain CbuG_Q212)</name>
    <name type="common">Coxiella burnetii (strain Q212)</name>
    <dbReference type="NCBI Taxonomy" id="434923"/>
    <lineage>
        <taxon>Bacteria</taxon>
        <taxon>Pseudomonadati</taxon>
        <taxon>Pseudomonadota</taxon>
        <taxon>Gammaproteobacteria</taxon>
        <taxon>Legionellales</taxon>
        <taxon>Coxiellaceae</taxon>
        <taxon>Coxiella</taxon>
    </lineage>
</organism>
<evidence type="ECO:0000255" key="1">
    <source>
        <dbReference type="HAMAP-Rule" id="MF_00260"/>
    </source>
</evidence>
<sequence length="307" mass="33927">MIKKRSILIVTRKSPLALWQAEFVKQQIENSHPHLACQILGCTTQGDRLTTEKLVDSGGKDLFVKDLQKALLNRDADIAVHSIKDMSACDGPELMVGAFIRREDPRDVLIVKGELSTLPPHAVIGTSSPRRQCQLKKFQPGCKIKEIRGNVGTRLAKLDAGHYEAIVLAAAGLKRLGLENRIHYYFDPHEFIPAIGQGAIGVECRSDDHEMQTLLKSLDHRETRLCVTAERAVNEKLGGDCFTPIAAHAIIKNDQLSLFAMLGKIDGRVIIRATEIGNSEEAKRIGFKVASQLLEQGGDSLLRELKQ</sequence>
<keyword id="KW-0627">Porphyrin biosynthesis</keyword>
<keyword id="KW-0808">Transferase</keyword>
<gene>
    <name evidence="1" type="primary">hemC</name>
    <name type="ordered locus">CbuG_2075</name>
</gene>
<protein>
    <recommendedName>
        <fullName evidence="1">Porphobilinogen deaminase</fullName>
        <shortName evidence="1">PBG</shortName>
        <ecNumber evidence="1">2.5.1.61</ecNumber>
    </recommendedName>
    <alternativeName>
        <fullName evidence="1">Hydroxymethylbilane synthase</fullName>
        <shortName evidence="1">HMBS</shortName>
    </alternativeName>
    <alternativeName>
        <fullName evidence="1">Pre-uroporphyrinogen synthase</fullName>
    </alternativeName>
</protein>
<comment type="function">
    <text evidence="1">Tetrapolymerization of the monopyrrole PBG into the hydroxymethylbilane pre-uroporphyrinogen in several discrete steps.</text>
</comment>
<comment type="catalytic activity">
    <reaction evidence="1">
        <text>4 porphobilinogen + H2O = hydroxymethylbilane + 4 NH4(+)</text>
        <dbReference type="Rhea" id="RHEA:13185"/>
        <dbReference type="ChEBI" id="CHEBI:15377"/>
        <dbReference type="ChEBI" id="CHEBI:28938"/>
        <dbReference type="ChEBI" id="CHEBI:57845"/>
        <dbReference type="ChEBI" id="CHEBI:58126"/>
        <dbReference type="EC" id="2.5.1.61"/>
    </reaction>
</comment>
<comment type="cofactor">
    <cofactor evidence="1">
        <name>dipyrromethane</name>
        <dbReference type="ChEBI" id="CHEBI:60342"/>
    </cofactor>
    <text evidence="1">Binds 1 dipyrromethane group covalently.</text>
</comment>
<comment type="pathway">
    <text evidence="1">Porphyrin-containing compound metabolism; protoporphyrin-IX biosynthesis; coproporphyrinogen-III from 5-aminolevulinate: step 2/4.</text>
</comment>
<comment type="subunit">
    <text evidence="1">Monomer.</text>
</comment>
<comment type="miscellaneous">
    <text evidence="1">The porphobilinogen subunits are added to the dipyrromethane group.</text>
</comment>
<comment type="similarity">
    <text evidence="1">Belongs to the HMBS family.</text>
</comment>
<reference key="1">
    <citation type="journal article" date="2009" name="Infect. Immun.">
        <title>Comparative genomics reveal extensive transposon-mediated genomic plasticity and diversity among potential effector proteins within the genus Coxiella.</title>
        <authorList>
            <person name="Beare P.A."/>
            <person name="Unsworth N."/>
            <person name="Andoh M."/>
            <person name="Voth D.E."/>
            <person name="Omsland A."/>
            <person name="Gilk S.D."/>
            <person name="Williams K.P."/>
            <person name="Sobral B.W."/>
            <person name="Kupko J.J. III"/>
            <person name="Porcella S.F."/>
            <person name="Samuel J.E."/>
            <person name="Heinzen R.A."/>
        </authorList>
    </citation>
    <scope>NUCLEOTIDE SEQUENCE [LARGE SCALE GENOMIC DNA]</scope>
    <source>
        <strain>CbuG_Q212</strain>
    </source>
</reference>
<proteinExistence type="inferred from homology"/>
<name>HEM3_COXB2</name>
<accession>B6J3T6</accession>